<dbReference type="EMBL" id="CP000453">
    <property type="protein sequence ID" value="ABI56769.1"/>
    <property type="molecule type" value="Genomic_DNA"/>
</dbReference>
<dbReference type="RefSeq" id="WP_011629164.1">
    <property type="nucleotide sequence ID" value="NC_008340.1"/>
</dbReference>
<dbReference type="SMR" id="Q0A8R8"/>
<dbReference type="KEGG" id="aeh:Mlg_1420"/>
<dbReference type="eggNOG" id="COG0236">
    <property type="taxonomic scope" value="Bacteria"/>
</dbReference>
<dbReference type="HOGENOM" id="CLU_108696_5_1_6"/>
<dbReference type="OrthoDB" id="9804551at2"/>
<dbReference type="UniPathway" id="UPA00094"/>
<dbReference type="Proteomes" id="UP000001962">
    <property type="component" value="Chromosome"/>
</dbReference>
<dbReference type="GO" id="GO:0005829">
    <property type="term" value="C:cytosol"/>
    <property type="evidence" value="ECO:0007669"/>
    <property type="project" value="TreeGrafter"/>
</dbReference>
<dbReference type="GO" id="GO:0016020">
    <property type="term" value="C:membrane"/>
    <property type="evidence" value="ECO:0007669"/>
    <property type="project" value="GOC"/>
</dbReference>
<dbReference type="GO" id="GO:0000035">
    <property type="term" value="F:acyl binding"/>
    <property type="evidence" value="ECO:0007669"/>
    <property type="project" value="TreeGrafter"/>
</dbReference>
<dbReference type="GO" id="GO:0000036">
    <property type="term" value="F:acyl carrier activity"/>
    <property type="evidence" value="ECO:0007669"/>
    <property type="project" value="UniProtKB-UniRule"/>
</dbReference>
<dbReference type="GO" id="GO:0009245">
    <property type="term" value="P:lipid A biosynthetic process"/>
    <property type="evidence" value="ECO:0007669"/>
    <property type="project" value="TreeGrafter"/>
</dbReference>
<dbReference type="FunFam" id="1.10.1200.10:FF:000001">
    <property type="entry name" value="Acyl carrier protein"/>
    <property type="match status" value="1"/>
</dbReference>
<dbReference type="Gene3D" id="1.10.1200.10">
    <property type="entry name" value="ACP-like"/>
    <property type="match status" value="1"/>
</dbReference>
<dbReference type="HAMAP" id="MF_01217">
    <property type="entry name" value="Acyl_carrier"/>
    <property type="match status" value="1"/>
</dbReference>
<dbReference type="InterPro" id="IPR003231">
    <property type="entry name" value="ACP"/>
</dbReference>
<dbReference type="InterPro" id="IPR036736">
    <property type="entry name" value="ACP-like_sf"/>
</dbReference>
<dbReference type="InterPro" id="IPR009081">
    <property type="entry name" value="PP-bd_ACP"/>
</dbReference>
<dbReference type="InterPro" id="IPR006162">
    <property type="entry name" value="Ppantetheine_attach_site"/>
</dbReference>
<dbReference type="NCBIfam" id="TIGR00517">
    <property type="entry name" value="acyl_carrier"/>
    <property type="match status" value="1"/>
</dbReference>
<dbReference type="NCBIfam" id="NF002148">
    <property type="entry name" value="PRK00982.1-2"/>
    <property type="match status" value="1"/>
</dbReference>
<dbReference type="NCBIfam" id="NF002149">
    <property type="entry name" value="PRK00982.1-3"/>
    <property type="match status" value="1"/>
</dbReference>
<dbReference type="NCBIfam" id="NF002150">
    <property type="entry name" value="PRK00982.1-4"/>
    <property type="match status" value="1"/>
</dbReference>
<dbReference type="NCBIfam" id="NF002151">
    <property type="entry name" value="PRK00982.1-5"/>
    <property type="match status" value="1"/>
</dbReference>
<dbReference type="PANTHER" id="PTHR20863">
    <property type="entry name" value="ACYL CARRIER PROTEIN"/>
    <property type="match status" value="1"/>
</dbReference>
<dbReference type="PANTHER" id="PTHR20863:SF76">
    <property type="entry name" value="CARRIER DOMAIN-CONTAINING PROTEIN"/>
    <property type="match status" value="1"/>
</dbReference>
<dbReference type="Pfam" id="PF00550">
    <property type="entry name" value="PP-binding"/>
    <property type="match status" value="1"/>
</dbReference>
<dbReference type="SUPFAM" id="SSF47336">
    <property type="entry name" value="ACP-like"/>
    <property type="match status" value="1"/>
</dbReference>
<dbReference type="PROSITE" id="PS50075">
    <property type="entry name" value="CARRIER"/>
    <property type="match status" value="1"/>
</dbReference>
<dbReference type="PROSITE" id="PS00012">
    <property type="entry name" value="PHOSPHOPANTETHEINE"/>
    <property type="match status" value="1"/>
</dbReference>
<protein>
    <recommendedName>
        <fullName evidence="1">Acyl carrier protein</fullName>
        <shortName evidence="1">ACP</shortName>
    </recommendedName>
</protein>
<accession>Q0A8R8</accession>
<comment type="function">
    <text evidence="1">Carrier of the growing fatty acid chain in fatty acid biosynthesis.</text>
</comment>
<comment type="pathway">
    <text evidence="1">Lipid metabolism; fatty acid biosynthesis.</text>
</comment>
<comment type="subcellular location">
    <subcellularLocation>
        <location evidence="1">Cytoplasm</location>
    </subcellularLocation>
</comment>
<comment type="PTM">
    <text evidence="1">4'-phosphopantetheine is transferred from CoA to a specific serine of apo-ACP by AcpS. This modification is essential for activity because fatty acids are bound in thioester linkage to the sulfhydryl of the prosthetic group.</text>
</comment>
<comment type="similarity">
    <text evidence="1">Belongs to the acyl carrier protein (ACP) family.</text>
</comment>
<feature type="chain" id="PRO_1000066546" description="Acyl carrier protein">
    <location>
        <begin position="1"/>
        <end position="79"/>
    </location>
</feature>
<feature type="domain" description="Carrier" evidence="2">
    <location>
        <begin position="2"/>
        <end position="77"/>
    </location>
</feature>
<feature type="modified residue" description="O-(pantetheine 4'-phosphoryl)serine" evidence="2">
    <location>
        <position position="37"/>
    </location>
</feature>
<keyword id="KW-0963">Cytoplasm</keyword>
<keyword id="KW-0275">Fatty acid biosynthesis</keyword>
<keyword id="KW-0276">Fatty acid metabolism</keyword>
<keyword id="KW-0444">Lipid biosynthesis</keyword>
<keyword id="KW-0443">Lipid metabolism</keyword>
<keyword id="KW-0596">Phosphopantetheine</keyword>
<keyword id="KW-0597">Phosphoprotein</keyword>
<keyword id="KW-1185">Reference proteome</keyword>
<organism>
    <name type="scientific">Alkalilimnicola ehrlichii (strain ATCC BAA-1101 / DSM 17681 / MLHE-1)</name>
    <dbReference type="NCBI Taxonomy" id="187272"/>
    <lineage>
        <taxon>Bacteria</taxon>
        <taxon>Pseudomonadati</taxon>
        <taxon>Pseudomonadota</taxon>
        <taxon>Gammaproteobacteria</taxon>
        <taxon>Chromatiales</taxon>
        <taxon>Ectothiorhodospiraceae</taxon>
        <taxon>Alkalilimnicola</taxon>
    </lineage>
</organism>
<evidence type="ECO:0000255" key="1">
    <source>
        <dbReference type="HAMAP-Rule" id="MF_01217"/>
    </source>
</evidence>
<evidence type="ECO:0000255" key="2">
    <source>
        <dbReference type="PROSITE-ProRule" id="PRU00258"/>
    </source>
</evidence>
<reference key="1">
    <citation type="submission" date="2006-08" db="EMBL/GenBank/DDBJ databases">
        <title>Complete sequence of Alkalilimnicola ehrilichei MLHE-1.</title>
        <authorList>
            <person name="Copeland A."/>
            <person name="Lucas S."/>
            <person name="Lapidus A."/>
            <person name="Barry K."/>
            <person name="Detter J.C."/>
            <person name="Glavina del Rio T."/>
            <person name="Hammon N."/>
            <person name="Israni S."/>
            <person name="Dalin E."/>
            <person name="Tice H."/>
            <person name="Pitluck S."/>
            <person name="Sims D."/>
            <person name="Brettin T."/>
            <person name="Bruce D."/>
            <person name="Han C."/>
            <person name="Tapia R."/>
            <person name="Gilna P."/>
            <person name="Schmutz J."/>
            <person name="Larimer F."/>
            <person name="Land M."/>
            <person name="Hauser L."/>
            <person name="Kyrpides N."/>
            <person name="Mikhailova N."/>
            <person name="Oremland R.S."/>
            <person name="Hoeft S.E."/>
            <person name="Switzer-Blum J."/>
            <person name="Kulp T."/>
            <person name="King G."/>
            <person name="Tabita R."/>
            <person name="Witte B."/>
            <person name="Santini J.M."/>
            <person name="Basu P."/>
            <person name="Hollibaugh J.T."/>
            <person name="Xie G."/>
            <person name="Stolz J.F."/>
            <person name="Richardson P."/>
        </authorList>
    </citation>
    <scope>NUCLEOTIDE SEQUENCE [LARGE SCALE GENOMIC DNA]</scope>
    <source>
        <strain>ATCC BAA-1101 / DSM 17681 / MLHE-1</strain>
    </source>
</reference>
<proteinExistence type="inferred from homology"/>
<name>ACP_ALKEH</name>
<gene>
    <name evidence="1" type="primary">acpP</name>
    <name type="ordered locus">Mlg_1420</name>
</gene>
<sequence>MSSIEERVKKIVVEQLGVKEEEVSGEASFVDDLGADSLDTVELVMALEEEFECEIPDEEAEKITTVQQAVDYINKHLGS</sequence>